<gene>
    <name evidence="1" type="primary">pyrC</name>
    <name type="ordered locus">BSU15500</name>
</gene>
<sequence>MSYLIKNGWILNENGEKTQADIRVTGETITAIGKLDATDNETVIDAKGLLVSPGFVDLHVHFREPGGEKKETIETGAKAAARGGYTTVAAMPNTRPVPDTKEQMEWVQNRIKETSCVRVLPYASITIRQIGDEMTNFEALKEAGAFAFTDDGVGIQTAGMMYEAMKRAAAIDKAIVAHCEDNSLIYGGSVHEGTFSKANGLNGIPSVCESVHIARDVLLAEAANCHYHVCHISTKESVRVVRDAKKAGIRVTAEVSPHHLLLCDEDIPGLDTNYKMNPPLRSPEDRAALIEGLLDGTIDFIATDHAPHTEEEKNTEMKLAPFGIVGLETAFPLLYTHFVKNGSWSLKQLIDYMTIKPCEAFGLPYGTLQTGQAADITLIDLEKEAVIDKETFLSKGKNTPFNGISCTGWPVATIAAGKLAYEEGRLVK</sequence>
<name>PYRC_BACSU</name>
<organism>
    <name type="scientific">Bacillus subtilis (strain 168)</name>
    <dbReference type="NCBI Taxonomy" id="224308"/>
    <lineage>
        <taxon>Bacteria</taxon>
        <taxon>Bacillati</taxon>
        <taxon>Bacillota</taxon>
        <taxon>Bacilli</taxon>
        <taxon>Bacillales</taxon>
        <taxon>Bacillaceae</taxon>
        <taxon>Bacillus</taxon>
    </lineage>
</organism>
<comment type="function">
    <text evidence="1">Catalyzes the reversible cyclization of carbamoyl aspartate to dihydroorotate.</text>
</comment>
<comment type="catalytic activity">
    <reaction evidence="1">
        <text>(S)-dihydroorotate + H2O = N-carbamoyl-L-aspartate + H(+)</text>
        <dbReference type="Rhea" id="RHEA:24296"/>
        <dbReference type="ChEBI" id="CHEBI:15377"/>
        <dbReference type="ChEBI" id="CHEBI:15378"/>
        <dbReference type="ChEBI" id="CHEBI:30864"/>
        <dbReference type="ChEBI" id="CHEBI:32814"/>
        <dbReference type="EC" id="3.5.2.3"/>
    </reaction>
</comment>
<comment type="cofactor">
    <cofactor evidence="1">
        <name>Zn(2+)</name>
        <dbReference type="ChEBI" id="CHEBI:29105"/>
    </cofactor>
    <text evidence="1">Binds 2 Zn(2+) ions per subunit.</text>
</comment>
<comment type="pathway">
    <text evidence="1">Pyrimidine metabolism; UMP biosynthesis via de novo pathway; (S)-dihydroorotate from bicarbonate: step 3/3.</text>
</comment>
<comment type="subunit">
    <text>Homodimer.</text>
</comment>
<comment type="similarity">
    <text evidence="1">Belongs to the metallo-dependent hydrolases superfamily. DHOase family. Class I DHOase subfamily.</text>
</comment>
<protein>
    <recommendedName>
        <fullName evidence="1">Dihydroorotase</fullName>
        <shortName evidence="1">DHOase</shortName>
        <ecNumber evidence="1">3.5.2.3</ecNumber>
    </recommendedName>
</protein>
<accession>P25995</accession>
<feature type="chain" id="PRO_0000147229" description="Dihydroorotase">
    <location>
        <begin position="1"/>
        <end position="428"/>
    </location>
</feature>
<feature type="active site" evidence="1">
    <location>
        <position position="304"/>
    </location>
</feature>
<feature type="binding site" evidence="1">
    <location>
        <position position="59"/>
    </location>
    <ligand>
        <name>Zn(2+)</name>
        <dbReference type="ChEBI" id="CHEBI:29105"/>
        <label>1</label>
    </ligand>
</feature>
<feature type="binding site" evidence="1">
    <location>
        <begin position="61"/>
        <end position="63"/>
    </location>
    <ligand>
        <name>substrate</name>
    </ligand>
</feature>
<feature type="binding site" evidence="1">
    <location>
        <position position="61"/>
    </location>
    <ligand>
        <name>Zn(2+)</name>
        <dbReference type="ChEBI" id="CHEBI:29105"/>
        <label>1</label>
    </ligand>
</feature>
<feature type="binding site" evidence="1">
    <location>
        <position position="93"/>
    </location>
    <ligand>
        <name>substrate</name>
    </ligand>
</feature>
<feature type="binding site" evidence="1">
    <location>
        <position position="151"/>
    </location>
    <ligand>
        <name>Zn(2+)</name>
        <dbReference type="ChEBI" id="CHEBI:29105"/>
        <label>1</label>
    </ligand>
</feature>
<feature type="binding site" evidence="1">
    <location>
        <position position="151"/>
    </location>
    <ligand>
        <name>Zn(2+)</name>
        <dbReference type="ChEBI" id="CHEBI:29105"/>
        <label>2</label>
    </ligand>
</feature>
<feature type="binding site" evidence="1">
    <location>
        <position position="178"/>
    </location>
    <ligand>
        <name>Zn(2+)</name>
        <dbReference type="ChEBI" id="CHEBI:29105"/>
        <label>2</label>
    </ligand>
</feature>
<feature type="binding site" evidence="1">
    <location>
        <position position="231"/>
    </location>
    <ligand>
        <name>Zn(2+)</name>
        <dbReference type="ChEBI" id="CHEBI:29105"/>
        <label>2</label>
    </ligand>
</feature>
<feature type="binding site" evidence="1">
    <location>
        <position position="277"/>
    </location>
    <ligand>
        <name>substrate</name>
    </ligand>
</feature>
<feature type="binding site" evidence="1">
    <location>
        <position position="304"/>
    </location>
    <ligand>
        <name>Zn(2+)</name>
        <dbReference type="ChEBI" id="CHEBI:29105"/>
        <label>1</label>
    </ligand>
</feature>
<feature type="binding site" evidence="1">
    <location>
        <position position="308"/>
    </location>
    <ligand>
        <name>substrate</name>
    </ligand>
</feature>
<feature type="binding site" evidence="1">
    <location>
        <begin position="322"/>
        <end position="323"/>
    </location>
    <ligand>
        <name>substrate</name>
    </ligand>
</feature>
<feature type="sequence conflict" description="In Ref. 1; AAA21268." evidence="2" ref="1">
    <original>A</original>
    <variation>G</variation>
    <location>
        <position position="81"/>
    </location>
</feature>
<feature type="sequence conflict" description="In Ref. 1; AAA21268." evidence="2" ref="1">
    <original>AEA</original>
    <variation>LG</variation>
    <location>
        <begin position="220"/>
        <end position="222"/>
    </location>
</feature>
<feature type="sequence conflict" description="In Ref. 1; AAA21268." evidence="2" ref="1">
    <original>GIVGLETAFPLLYTHFVKNGSWSLKQLID</original>
    <variation>RNCRLRNSIPASLHTLCQKWQLVTEAADLT</variation>
    <location>
        <begin position="323"/>
        <end position="351"/>
    </location>
</feature>
<reference key="1">
    <citation type="journal article" date="1991" name="J. Biol. Chem.">
        <title>Functional organization and nucleotide sequence of the Bacillus subtilis pyrimidine biosynthetic operon.</title>
        <authorList>
            <person name="Quinn C.L."/>
            <person name="Stephenson B.T."/>
            <person name="Switzer R.L."/>
        </authorList>
    </citation>
    <scope>NUCLEOTIDE SEQUENCE [GENOMIC DNA]</scope>
</reference>
<reference key="2">
    <citation type="journal article" date="1997" name="Nature">
        <title>The complete genome sequence of the Gram-positive bacterium Bacillus subtilis.</title>
        <authorList>
            <person name="Kunst F."/>
            <person name="Ogasawara N."/>
            <person name="Moszer I."/>
            <person name="Albertini A.M."/>
            <person name="Alloni G."/>
            <person name="Azevedo V."/>
            <person name="Bertero M.G."/>
            <person name="Bessieres P."/>
            <person name="Bolotin A."/>
            <person name="Borchert S."/>
            <person name="Borriss R."/>
            <person name="Boursier L."/>
            <person name="Brans A."/>
            <person name="Braun M."/>
            <person name="Brignell S.C."/>
            <person name="Bron S."/>
            <person name="Brouillet S."/>
            <person name="Bruschi C.V."/>
            <person name="Caldwell B."/>
            <person name="Capuano V."/>
            <person name="Carter N.M."/>
            <person name="Choi S.-K."/>
            <person name="Codani J.-J."/>
            <person name="Connerton I.F."/>
            <person name="Cummings N.J."/>
            <person name="Daniel R.A."/>
            <person name="Denizot F."/>
            <person name="Devine K.M."/>
            <person name="Duesterhoeft A."/>
            <person name="Ehrlich S.D."/>
            <person name="Emmerson P.T."/>
            <person name="Entian K.-D."/>
            <person name="Errington J."/>
            <person name="Fabret C."/>
            <person name="Ferrari E."/>
            <person name="Foulger D."/>
            <person name="Fritz C."/>
            <person name="Fujita M."/>
            <person name="Fujita Y."/>
            <person name="Fuma S."/>
            <person name="Galizzi A."/>
            <person name="Galleron N."/>
            <person name="Ghim S.-Y."/>
            <person name="Glaser P."/>
            <person name="Goffeau A."/>
            <person name="Golightly E.J."/>
            <person name="Grandi G."/>
            <person name="Guiseppi G."/>
            <person name="Guy B.J."/>
            <person name="Haga K."/>
            <person name="Haiech J."/>
            <person name="Harwood C.R."/>
            <person name="Henaut A."/>
            <person name="Hilbert H."/>
            <person name="Holsappel S."/>
            <person name="Hosono S."/>
            <person name="Hullo M.-F."/>
            <person name="Itaya M."/>
            <person name="Jones L.-M."/>
            <person name="Joris B."/>
            <person name="Karamata D."/>
            <person name="Kasahara Y."/>
            <person name="Klaerr-Blanchard M."/>
            <person name="Klein C."/>
            <person name="Kobayashi Y."/>
            <person name="Koetter P."/>
            <person name="Koningstein G."/>
            <person name="Krogh S."/>
            <person name="Kumano M."/>
            <person name="Kurita K."/>
            <person name="Lapidus A."/>
            <person name="Lardinois S."/>
            <person name="Lauber J."/>
            <person name="Lazarevic V."/>
            <person name="Lee S.-M."/>
            <person name="Levine A."/>
            <person name="Liu H."/>
            <person name="Masuda S."/>
            <person name="Mauel C."/>
            <person name="Medigue C."/>
            <person name="Medina N."/>
            <person name="Mellado R.P."/>
            <person name="Mizuno M."/>
            <person name="Moestl D."/>
            <person name="Nakai S."/>
            <person name="Noback M."/>
            <person name="Noone D."/>
            <person name="O'Reilly M."/>
            <person name="Ogawa K."/>
            <person name="Ogiwara A."/>
            <person name="Oudega B."/>
            <person name="Park S.-H."/>
            <person name="Parro V."/>
            <person name="Pohl T.M."/>
            <person name="Portetelle D."/>
            <person name="Porwollik S."/>
            <person name="Prescott A.M."/>
            <person name="Presecan E."/>
            <person name="Pujic P."/>
            <person name="Purnelle B."/>
            <person name="Rapoport G."/>
            <person name="Rey M."/>
            <person name="Reynolds S."/>
            <person name="Rieger M."/>
            <person name="Rivolta C."/>
            <person name="Rocha E."/>
            <person name="Roche B."/>
            <person name="Rose M."/>
            <person name="Sadaie Y."/>
            <person name="Sato T."/>
            <person name="Scanlan E."/>
            <person name="Schleich S."/>
            <person name="Schroeter R."/>
            <person name="Scoffone F."/>
            <person name="Sekiguchi J."/>
            <person name="Sekowska A."/>
            <person name="Seror S.J."/>
            <person name="Serror P."/>
            <person name="Shin B.-S."/>
            <person name="Soldo B."/>
            <person name="Sorokin A."/>
            <person name="Tacconi E."/>
            <person name="Takagi T."/>
            <person name="Takahashi H."/>
            <person name="Takemaru K."/>
            <person name="Takeuchi M."/>
            <person name="Tamakoshi A."/>
            <person name="Tanaka T."/>
            <person name="Terpstra P."/>
            <person name="Tognoni A."/>
            <person name="Tosato V."/>
            <person name="Uchiyama S."/>
            <person name="Vandenbol M."/>
            <person name="Vannier F."/>
            <person name="Vassarotti A."/>
            <person name="Viari A."/>
            <person name="Wambutt R."/>
            <person name="Wedler E."/>
            <person name="Wedler H."/>
            <person name="Weitzenegger T."/>
            <person name="Winters P."/>
            <person name="Wipat A."/>
            <person name="Yamamoto H."/>
            <person name="Yamane K."/>
            <person name="Yasumoto K."/>
            <person name="Yata K."/>
            <person name="Yoshida K."/>
            <person name="Yoshikawa H.-F."/>
            <person name="Zumstein E."/>
            <person name="Yoshikawa H."/>
            <person name="Danchin A."/>
        </authorList>
    </citation>
    <scope>NUCLEOTIDE SEQUENCE [LARGE SCALE GENOMIC DNA]</scope>
    <source>
        <strain>168</strain>
    </source>
</reference>
<reference key="3">
    <citation type="journal article" date="2009" name="Microbiology">
        <title>From a consortium sequence to a unified sequence: the Bacillus subtilis 168 reference genome a decade later.</title>
        <authorList>
            <person name="Barbe V."/>
            <person name="Cruveiller S."/>
            <person name="Kunst F."/>
            <person name="Lenoble P."/>
            <person name="Meurice G."/>
            <person name="Sekowska A."/>
            <person name="Vallenet D."/>
            <person name="Wang T."/>
            <person name="Moszer I."/>
            <person name="Medigue C."/>
            <person name="Danchin A."/>
        </authorList>
    </citation>
    <scope>SEQUENCE REVISION</scope>
</reference>
<keyword id="KW-0378">Hydrolase</keyword>
<keyword id="KW-0479">Metal-binding</keyword>
<keyword id="KW-0665">Pyrimidine biosynthesis</keyword>
<keyword id="KW-1185">Reference proteome</keyword>
<keyword id="KW-0862">Zinc</keyword>
<evidence type="ECO:0000255" key="1">
    <source>
        <dbReference type="HAMAP-Rule" id="MF_00220"/>
    </source>
</evidence>
<evidence type="ECO:0000305" key="2"/>
<dbReference type="EC" id="3.5.2.3" evidence="1"/>
<dbReference type="EMBL" id="M59757">
    <property type="protein sequence ID" value="AAA21268.1"/>
    <property type="molecule type" value="Genomic_DNA"/>
</dbReference>
<dbReference type="EMBL" id="AL009126">
    <property type="protein sequence ID" value="CAB13424.2"/>
    <property type="molecule type" value="Genomic_DNA"/>
</dbReference>
<dbReference type="PIR" id="D39845">
    <property type="entry name" value="DEBSO"/>
</dbReference>
<dbReference type="RefSeq" id="NP_389433.2">
    <property type="nucleotide sequence ID" value="NC_000964.3"/>
</dbReference>
<dbReference type="RefSeq" id="WP_003245035.1">
    <property type="nucleotide sequence ID" value="NZ_OZ025638.1"/>
</dbReference>
<dbReference type="SMR" id="P25995"/>
<dbReference type="FunCoup" id="P25995">
    <property type="interactions" value="386"/>
</dbReference>
<dbReference type="IntAct" id="P25995">
    <property type="interactions" value="1"/>
</dbReference>
<dbReference type="MINT" id="P25995"/>
<dbReference type="STRING" id="224308.BSU15500"/>
<dbReference type="PaxDb" id="224308-BSU15500"/>
<dbReference type="EnsemblBacteria" id="CAB13424">
    <property type="protein sequence ID" value="CAB13424"/>
    <property type="gene ID" value="BSU_15500"/>
</dbReference>
<dbReference type="GeneID" id="937095"/>
<dbReference type="KEGG" id="bsu:BSU15500"/>
<dbReference type="PATRIC" id="fig|224308.179.peg.1689"/>
<dbReference type="eggNOG" id="COG0044">
    <property type="taxonomic scope" value="Bacteria"/>
</dbReference>
<dbReference type="InParanoid" id="P25995"/>
<dbReference type="OrthoDB" id="9765462at2"/>
<dbReference type="PhylomeDB" id="P25995"/>
<dbReference type="BioCyc" id="BSUB:BSU15500-MONOMER"/>
<dbReference type="BioCyc" id="MetaCyc:BSU15500-MONOMER"/>
<dbReference type="UniPathway" id="UPA00070">
    <property type="reaction ID" value="UER00117"/>
</dbReference>
<dbReference type="Proteomes" id="UP000001570">
    <property type="component" value="Chromosome"/>
</dbReference>
<dbReference type="GO" id="GO:0005737">
    <property type="term" value="C:cytoplasm"/>
    <property type="evidence" value="ECO:0000318"/>
    <property type="project" value="GO_Central"/>
</dbReference>
<dbReference type="GO" id="GO:0004038">
    <property type="term" value="F:allantoinase activity"/>
    <property type="evidence" value="ECO:0000318"/>
    <property type="project" value="GO_Central"/>
</dbReference>
<dbReference type="GO" id="GO:0004151">
    <property type="term" value="F:dihydroorotase activity"/>
    <property type="evidence" value="ECO:0007669"/>
    <property type="project" value="UniProtKB-UniRule"/>
</dbReference>
<dbReference type="GO" id="GO:0008270">
    <property type="term" value="F:zinc ion binding"/>
    <property type="evidence" value="ECO:0007669"/>
    <property type="project" value="UniProtKB-UniRule"/>
</dbReference>
<dbReference type="GO" id="GO:0044205">
    <property type="term" value="P:'de novo' UMP biosynthetic process"/>
    <property type="evidence" value="ECO:0007669"/>
    <property type="project" value="UniProtKB-UniRule"/>
</dbReference>
<dbReference type="GO" id="GO:0006145">
    <property type="term" value="P:purine nucleobase catabolic process"/>
    <property type="evidence" value="ECO:0000318"/>
    <property type="project" value="GO_Central"/>
</dbReference>
<dbReference type="CDD" id="cd01317">
    <property type="entry name" value="DHOase_IIa"/>
    <property type="match status" value="1"/>
</dbReference>
<dbReference type="Gene3D" id="3.20.20.140">
    <property type="entry name" value="Metal-dependent hydrolases"/>
    <property type="match status" value="1"/>
</dbReference>
<dbReference type="Gene3D" id="2.30.40.10">
    <property type="entry name" value="Urease, subunit C, domain 1"/>
    <property type="match status" value="1"/>
</dbReference>
<dbReference type="HAMAP" id="MF_00220_B">
    <property type="entry name" value="PyrC_classI_B"/>
    <property type="match status" value="1"/>
</dbReference>
<dbReference type="InterPro" id="IPR006680">
    <property type="entry name" value="Amidohydro-rel"/>
</dbReference>
<dbReference type="InterPro" id="IPR004722">
    <property type="entry name" value="DHOase"/>
</dbReference>
<dbReference type="InterPro" id="IPR050138">
    <property type="entry name" value="DHOase/Allantoinase_Hydrolase"/>
</dbReference>
<dbReference type="InterPro" id="IPR002195">
    <property type="entry name" value="Dihydroorotase_CS"/>
</dbReference>
<dbReference type="InterPro" id="IPR011059">
    <property type="entry name" value="Metal-dep_hydrolase_composite"/>
</dbReference>
<dbReference type="InterPro" id="IPR032466">
    <property type="entry name" value="Metal_Hydrolase"/>
</dbReference>
<dbReference type="NCBIfam" id="NF006837">
    <property type="entry name" value="PRK09357.1-2"/>
    <property type="match status" value="1"/>
</dbReference>
<dbReference type="NCBIfam" id="TIGR00857">
    <property type="entry name" value="pyrC_multi"/>
    <property type="match status" value="1"/>
</dbReference>
<dbReference type="PANTHER" id="PTHR43668">
    <property type="entry name" value="ALLANTOINASE"/>
    <property type="match status" value="1"/>
</dbReference>
<dbReference type="PANTHER" id="PTHR43668:SF2">
    <property type="entry name" value="ALLANTOINASE"/>
    <property type="match status" value="1"/>
</dbReference>
<dbReference type="Pfam" id="PF01979">
    <property type="entry name" value="Amidohydro_1"/>
    <property type="match status" value="1"/>
</dbReference>
<dbReference type="SUPFAM" id="SSF51338">
    <property type="entry name" value="Composite domain of metallo-dependent hydrolases"/>
    <property type="match status" value="1"/>
</dbReference>
<dbReference type="SUPFAM" id="SSF51556">
    <property type="entry name" value="Metallo-dependent hydrolases"/>
    <property type="match status" value="1"/>
</dbReference>
<dbReference type="PROSITE" id="PS00482">
    <property type="entry name" value="DIHYDROOROTASE_1"/>
    <property type="match status" value="1"/>
</dbReference>
<dbReference type="PROSITE" id="PS00483">
    <property type="entry name" value="DIHYDROOROTASE_2"/>
    <property type="match status" value="1"/>
</dbReference>
<proteinExistence type="inferred from homology"/>